<protein>
    <recommendedName>
        <fullName evidence="1">Glycerol kinase</fullName>
        <ecNumber evidence="1">2.7.1.30</ecNumber>
    </recommendedName>
    <alternativeName>
        <fullName evidence="1">ATP:glycerol 3-phosphotransferase</fullName>
    </alternativeName>
    <alternativeName>
        <fullName evidence="1">Glycerokinase</fullName>
        <shortName evidence="1">GK</shortName>
    </alternativeName>
</protein>
<reference key="1">
    <citation type="journal article" date="2009" name="Appl. Environ. Microbiol.">
        <title>Rhizobium sp. strain NGR234 possesses a remarkable number of secretion systems.</title>
        <authorList>
            <person name="Schmeisser C."/>
            <person name="Liesegang H."/>
            <person name="Krysciak D."/>
            <person name="Bakkou N."/>
            <person name="Le Quere A."/>
            <person name="Wollherr A."/>
            <person name="Heinemeyer I."/>
            <person name="Morgenstern B."/>
            <person name="Pommerening-Roeser A."/>
            <person name="Flores M."/>
            <person name="Palacios R."/>
            <person name="Brenner S."/>
            <person name="Gottschalk G."/>
            <person name="Schmitz R.A."/>
            <person name="Broughton W.J."/>
            <person name="Perret X."/>
            <person name="Strittmatter A.W."/>
            <person name="Streit W.R."/>
        </authorList>
    </citation>
    <scope>NUCLEOTIDE SEQUENCE [LARGE SCALE GENOMIC DNA]</scope>
    <source>
        <strain>NBRC 101917 / NGR234</strain>
    </source>
</reference>
<dbReference type="EC" id="2.7.1.30" evidence="1"/>
<dbReference type="EMBL" id="CP001389">
    <property type="protein sequence ID" value="ACP26143.1"/>
    <property type="molecule type" value="Genomic_DNA"/>
</dbReference>
<dbReference type="RefSeq" id="WP_012708901.1">
    <property type="nucleotide sequence ID" value="NC_012587.1"/>
</dbReference>
<dbReference type="RefSeq" id="YP_002826896.1">
    <property type="nucleotide sequence ID" value="NC_012587.1"/>
</dbReference>
<dbReference type="SMR" id="C3MG71"/>
<dbReference type="STRING" id="394.NGR_c23840"/>
<dbReference type="KEGG" id="rhi:NGR_c23840"/>
<dbReference type="PATRIC" id="fig|394.7.peg.5204"/>
<dbReference type="eggNOG" id="COG0554">
    <property type="taxonomic scope" value="Bacteria"/>
</dbReference>
<dbReference type="HOGENOM" id="CLU_009281_2_3_5"/>
<dbReference type="OrthoDB" id="9805576at2"/>
<dbReference type="UniPathway" id="UPA00618">
    <property type="reaction ID" value="UER00672"/>
</dbReference>
<dbReference type="Proteomes" id="UP000001054">
    <property type="component" value="Chromosome"/>
</dbReference>
<dbReference type="GO" id="GO:0005829">
    <property type="term" value="C:cytosol"/>
    <property type="evidence" value="ECO:0007669"/>
    <property type="project" value="TreeGrafter"/>
</dbReference>
<dbReference type="GO" id="GO:0005524">
    <property type="term" value="F:ATP binding"/>
    <property type="evidence" value="ECO:0007669"/>
    <property type="project" value="UniProtKB-UniRule"/>
</dbReference>
<dbReference type="GO" id="GO:0004370">
    <property type="term" value="F:glycerol kinase activity"/>
    <property type="evidence" value="ECO:0000250"/>
    <property type="project" value="UniProtKB"/>
</dbReference>
<dbReference type="GO" id="GO:0019563">
    <property type="term" value="P:glycerol catabolic process"/>
    <property type="evidence" value="ECO:0007669"/>
    <property type="project" value="UniProtKB-UniRule"/>
</dbReference>
<dbReference type="GO" id="GO:0006071">
    <property type="term" value="P:glycerol metabolic process"/>
    <property type="evidence" value="ECO:0000250"/>
    <property type="project" value="UniProtKB"/>
</dbReference>
<dbReference type="GO" id="GO:0006072">
    <property type="term" value="P:glycerol-3-phosphate metabolic process"/>
    <property type="evidence" value="ECO:0007669"/>
    <property type="project" value="InterPro"/>
</dbReference>
<dbReference type="CDD" id="cd07786">
    <property type="entry name" value="FGGY_EcGK_like"/>
    <property type="match status" value="1"/>
</dbReference>
<dbReference type="FunFam" id="3.30.420.40:FF:000007">
    <property type="entry name" value="Glycerol kinase"/>
    <property type="match status" value="1"/>
</dbReference>
<dbReference type="FunFam" id="3.30.420.40:FF:000008">
    <property type="entry name" value="Glycerol kinase"/>
    <property type="match status" value="1"/>
</dbReference>
<dbReference type="Gene3D" id="3.30.420.40">
    <property type="match status" value="2"/>
</dbReference>
<dbReference type="HAMAP" id="MF_00186">
    <property type="entry name" value="Glycerol_kin"/>
    <property type="match status" value="1"/>
</dbReference>
<dbReference type="InterPro" id="IPR043129">
    <property type="entry name" value="ATPase_NBD"/>
</dbReference>
<dbReference type="InterPro" id="IPR000577">
    <property type="entry name" value="Carb_kinase_FGGY"/>
</dbReference>
<dbReference type="InterPro" id="IPR018483">
    <property type="entry name" value="Carb_kinase_FGGY_CS"/>
</dbReference>
<dbReference type="InterPro" id="IPR018485">
    <property type="entry name" value="FGGY_C"/>
</dbReference>
<dbReference type="InterPro" id="IPR018484">
    <property type="entry name" value="FGGY_N"/>
</dbReference>
<dbReference type="InterPro" id="IPR005999">
    <property type="entry name" value="Glycerol_kin"/>
</dbReference>
<dbReference type="NCBIfam" id="TIGR01311">
    <property type="entry name" value="glycerol_kin"/>
    <property type="match status" value="1"/>
</dbReference>
<dbReference type="NCBIfam" id="NF000756">
    <property type="entry name" value="PRK00047.1"/>
    <property type="match status" value="1"/>
</dbReference>
<dbReference type="PANTHER" id="PTHR10196:SF78">
    <property type="entry name" value="GLYCEROL KINASE"/>
    <property type="match status" value="1"/>
</dbReference>
<dbReference type="PANTHER" id="PTHR10196">
    <property type="entry name" value="SUGAR KINASE"/>
    <property type="match status" value="1"/>
</dbReference>
<dbReference type="Pfam" id="PF02782">
    <property type="entry name" value="FGGY_C"/>
    <property type="match status" value="1"/>
</dbReference>
<dbReference type="Pfam" id="PF00370">
    <property type="entry name" value="FGGY_N"/>
    <property type="match status" value="1"/>
</dbReference>
<dbReference type="PIRSF" id="PIRSF000538">
    <property type="entry name" value="GlpK"/>
    <property type="match status" value="1"/>
</dbReference>
<dbReference type="SUPFAM" id="SSF53067">
    <property type="entry name" value="Actin-like ATPase domain"/>
    <property type="match status" value="2"/>
</dbReference>
<dbReference type="PROSITE" id="PS00933">
    <property type="entry name" value="FGGY_KINASES_1"/>
    <property type="match status" value="1"/>
</dbReference>
<dbReference type="PROSITE" id="PS00445">
    <property type="entry name" value="FGGY_KINASES_2"/>
    <property type="match status" value="1"/>
</dbReference>
<organism>
    <name type="scientific">Sinorhizobium fredii (strain NBRC 101917 / NGR234)</name>
    <dbReference type="NCBI Taxonomy" id="394"/>
    <lineage>
        <taxon>Bacteria</taxon>
        <taxon>Pseudomonadati</taxon>
        <taxon>Pseudomonadota</taxon>
        <taxon>Alphaproteobacteria</taxon>
        <taxon>Hyphomicrobiales</taxon>
        <taxon>Rhizobiaceae</taxon>
        <taxon>Sinorhizobium/Ensifer group</taxon>
        <taxon>Sinorhizobium</taxon>
    </lineage>
</organism>
<feature type="chain" id="PRO_1000124199" description="Glycerol kinase">
    <location>
        <begin position="1"/>
        <end position="497"/>
    </location>
</feature>
<feature type="binding site" evidence="1">
    <location>
        <position position="12"/>
    </location>
    <ligand>
        <name>ADP</name>
        <dbReference type="ChEBI" id="CHEBI:456216"/>
    </ligand>
</feature>
<feature type="binding site" evidence="1">
    <location>
        <position position="12"/>
    </location>
    <ligand>
        <name>ATP</name>
        <dbReference type="ChEBI" id="CHEBI:30616"/>
    </ligand>
</feature>
<feature type="binding site" evidence="1">
    <location>
        <position position="12"/>
    </location>
    <ligand>
        <name>sn-glycerol 3-phosphate</name>
        <dbReference type="ChEBI" id="CHEBI:57597"/>
    </ligand>
</feature>
<feature type="binding site" evidence="1">
    <location>
        <position position="13"/>
    </location>
    <ligand>
        <name>ATP</name>
        <dbReference type="ChEBI" id="CHEBI:30616"/>
    </ligand>
</feature>
<feature type="binding site" evidence="1">
    <location>
        <position position="14"/>
    </location>
    <ligand>
        <name>ATP</name>
        <dbReference type="ChEBI" id="CHEBI:30616"/>
    </ligand>
</feature>
<feature type="binding site" evidence="1">
    <location>
        <position position="16"/>
    </location>
    <ligand>
        <name>ADP</name>
        <dbReference type="ChEBI" id="CHEBI:456216"/>
    </ligand>
</feature>
<feature type="binding site" evidence="1">
    <location>
        <position position="82"/>
    </location>
    <ligand>
        <name>glycerol</name>
        <dbReference type="ChEBI" id="CHEBI:17754"/>
    </ligand>
</feature>
<feature type="binding site" evidence="1">
    <location>
        <position position="82"/>
    </location>
    <ligand>
        <name>sn-glycerol 3-phosphate</name>
        <dbReference type="ChEBI" id="CHEBI:57597"/>
    </ligand>
</feature>
<feature type="binding site" evidence="1">
    <location>
        <position position="83"/>
    </location>
    <ligand>
        <name>glycerol</name>
        <dbReference type="ChEBI" id="CHEBI:17754"/>
    </ligand>
</feature>
<feature type="binding site" evidence="1">
    <location>
        <position position="83"/>
    </location>
    <ligand>
        <name>sn-glycerol 3-phosphate</name>
        <dbReference type="ChEBI" id="CHEBI:57597"/>
    </ligand>
</feature>
<feature type="binding site" evidence="1">
    <location>
        <position position="134"/>
    </location>
    <ligand>
        <name>glycerol</name>
        <dbReference type="ChEBI" id="CHEBI:17754"/>
    </ligand>
</feature>
<feature type="binding site" evidence="1">
    <location>
        <position position="134"/>
    </location>
    <ligand>
        <name>sn-glycerol 3-phosphate</name>
        <dbReference type="ChEBI" id="CHEBI:57597"/>
    </ligand>
</feature>
<feature type="binding site" evidence="1">
    <location>
        <position position="243"/>
    </location>
    <ligand>
        <name>glycerol</name>
        <dbReference type="ChEBI" id="CHEBI:17754"/>
    </ligand>
</feature>
<feature type="binding site" evidence="1">
    <location>
        <position position="243"/>
    </location>
    <ligand>
        <name>sn-glycerol 3-phosphate</name>
        <dbReference type="ChEBI" id="CHEBI:57597"/>
    </ligand>
</feature>
<feature type="binding site" evidence="1">
    <location>
        <position position="244"/>
    </location>
    <ligand>
        <name>glycerol</name>
        <dbReference type="ChEBI" id="CHEBI:17754"/>
    </ligand>
</feature>
<feature type="binding site" evidence="1">
    <location>
        <position position="265"/>
    </location>
    <ligand>
        <name>ADP</name>
        <dbReference type="ChEBI" id="CHEBI:456216"/>
    </ligand>
</feature>
<feature type="binding site" evidence="1">
    <location>
        <position position="265"/>
    </location>
    <ligand>
        <name>ATP</name>
        <dbReference type="ChEBI" id="CHEBI:30616"/>
    </ligand>
</feature>
<feature type="binding site" evidence="1">
    <location>
        <position position="308"/>
    </location>
    <ligand>
        <name>ADP</name>
        <dbReference type="ChEBI" id="CHEBI:456216"/>
    </ligand>
</feature>
<feature type="binding site" evidence="1">
    <location>
        <position position="308"/>
    </location>
    <ligand>
        <name>ATP</name>
        <dbReference type="ChEBI" id="CHEBI:30616"/>
    </ligand>
</feature>
<feature type="binding site" evidence="1">
    <location>
        <position position="312"/>
    </location>
    <ligand>
        <name>ATP</name>
        <dbReference type="ChEBI" id="CHEBI:30616"/>
    </ligand>
</feature>
<feature type="binding site" evidence="1">
    <location>
        <position position="411"/>
    </location>
    <ligand>
        <name>ADP</name>
        <dbReference type="ChEBI" id="CHEBI:456216"/>
    </ligand>
</feature>
<feature type="binding site" evidence="1">
    <location>
        <position position="411"/>
    </location>
    <ligand>
        <name>ATP</name>
        <dbReference type="ChEBI" id="CHEBI:30616"/>
    </ligand>
</feature>
<gene>
    <name evidence="1" type="primary">glpK</name>
    <name type="ordered locus">NGR_c23840</name>
</gene>
<keyword id="KW-0067">ATP-binding</keyword>
<keyword id="KW-0319">Glycerol metabolism</keyword>
<keyword id="KW-0418">Kinase</keyword>
<keyword id="KW-0547">Nucleotide-binding</keyword>
<keyword id="KW-1185">Reference proteome</keyword>
<keyword id="KW-0808">Transferase</keyword>
<proteinExistence type="inferred from homology"/>
<accession>C3MG71</accession>
<comment type="function">
    <text evidence="1">Key enzyme in the regulation of glycerol uptake and metabolism. Catalyzes the phosphorylation of glycerol to yield sn-glycerol 3-phosphate.</text>
</comment>
<comment type="catalytic activity">
    <reaction evidence="1">
        <text>glycerol + ATP = sn-glycerol 3-phosphate + ADP + H(+)</text>
        <dbReference type="Rhea" id="RHEA:21644"/>
        <dbReference type="ChEBI" id="CHEBI:15378"/>
        <dbReference type="ChEBI" id="CHEBI:17754"/>
        <dbReference type="ChEBI" id="CHEBI:30616"/>
        <dbReference type="ChEBI" id="CHEBI:57597"/>
        <dbReference type="ChEBI" id="CHEBI:456216"/>
        <dbReference type="EC" id="2.7.1.30"/>
    </reaction>
</comment>
<comment type="activity regulation">
    <text evidence="1">Inhibited by fructose 1,6-bisphosphate (FBP).</text>
</comment>
<comment type="pathway">
    <text evidence="1">Polyol metabolism; glycerol degradation via glycerol kinase pathway; sn-glycerol 3-phosphate from glycerol: step 1/1.</text>
</comment>
<comment type="similarity">
    <text evidence="1">Belongs to the FGGY kinase family.</text>
</comment>
<name>GLPK_SINFN</name>
<sequence>MGGYILAIDQGTTSTRAIVFDGKQQVAGVGQKEFKQYFPKSGWVEHDPEEIWETVLFTARQAIEKAGISATDIAAIGITNQRETVVVWDRATGKPIHNAIVWQDRRTASFCDKLKKQGLEKTFSKKTGLLLDPYFSGTKLNWLLTNVKGAPARAAKGELCFGTVDTFLIWRLTGGKSFVTDATNASRTLIYNIVDNSWDDELTDILRIPRVMLPEVKDCAADFGVTDASLFGAAIPILGVAGDQQAATIGQACFKPGMLKSTYGTGCFALLNTGKDIVRSKNRLLTTIAYRLNGETTYALEGSIFVAGAAVQWLRDGLKVIKAAPDTGTLAESADPTQDVYLVPAFTGLGAPHWDPDARGAIYGMTRNTGPAEFARAALESVCYQTRDLLDAMHRDWRSNGKDTVLRVDGGMVASDWTMQRLSDLLDAPVDRPVILETTALGVAWLAGSRAGVWPKQEEFAKSWARDRRFEPKMDGTTRKGKLKGWRSAVKRTLMAA</sequence>
<evidence type="ECO:0000255" key="1">
    <source>
        <dbReference type="HAMAP-Rule" id="MF_00186"/>
    </source>
</evidence>